<proteinExistence type="inferred from homology"/>
<gene>
    <name evidence="1" type="primary">serC</name>
    <name type="ordered locus">EcolC_2689</name>
</gene>
<comment type="function">
    <text evidence="1">Catalyzes the reversible conversion of 3-phosphohydroxypyruvate to phosphoserine and of 3-hydroxy-2-oxo-4-phosphonooxybutanoate to phosphohydroxythreonine.</text>
</comment>
<comment type="catalytic activity">
    <reaction evidence="1">
        <text>O-phospho-L-serine + 2-oxoglutarate = 3-phosphooxypyruvate + L-glutamate</text>
        <dbReference type="Rhea" id="RHEA:14329"/>
        <dbReference type="ChEBI" id="CHEBI:16810"/>
        <dbReference type="ChEBI" id="CHEBI:18110"/>
        <dbReference type="ChEBI" id="CHEBI:29985"/>
        <dbReference type="ChEBI" id="CHEBI:57524"/>
        <dbReference type="EC" id="2.6.1.52"/>
    </reaction>
</comment>
<comment type="catalytic activity">
    <reaction evidence="1">
        <text>4-(phosphooxy)-L-threonine + 2-oxoglutarate = (R)-3-hydroxy-2-oxo-4-phosphooxybutanoate + L-glutamate</text>
        <dbReference type="Rhea" id="RHEA:16573"/>
        <dbReference type="ChEBI" id="CHEBI:16810"/>
        <dbReference type="ChEBI" id="CHEBI:29985"/>
        <dbReference type="ChEBI" id="CHEBI:58452"/>
        <dbReference type="ChEBI" id="CHEBI:58538"/>
        <dbReference type="EC" id="2.6.1.52"/>
    </reaction>
</comment>
<comment type="cofactor">
    <cofactor evidence="1">
        <name>pyridoxal 5'-phosphate</name>
        <dbReference type="ChEBI" id="CHEBI:597326"/>
    </cofactor>
    <text evidence="1">Binds 1 pyridoxal phosphate per subunit.</text>
</comment>
<comment type="pathway">
    <text evidence="1">Amino-acid biosynthesis; L-serine biosynthesis; L-serine from 3-phospho-D-glycerate: step 2/3.</text>
</comment>
<comment type="pathway">
    <text evidence="1">Cofactor biosynthesis; pyridoxine 5'-phosphate biosynthesis; pyridoxine 5'-phosphate from D-erythrose 4-phosphate: step 3/5.</text>
</comment>
<comment type="subunit">
    <text evidence="1">Homodimer.</text>
</comment>
<comment type="subcellular location">
    <subcellularLocation>
        <location evidence="1">Cytoplasm</location>
    </subcellularLocation>
</comment>
<comment type="similarity">
    <text evidence="1">Belongs to the class-V pyridoxal-phosphate-dependent aminotransferase family. SerC subfamily.</text>
</comment>
<protein>
    <recommendedName>
        <fullName evidence="1">Phosphoserine aminotransferase</fullName>
        <ecNumber evidence="1">2.6.1.52</ecNumber>
    </recommendedName>
    <alternativeName>
        <fullName evidence="1">Phosphohydroxythreonine aminotransferase</fullName>
        <shortName evidence="1">PSAT</shortName>
    </alternativeName>
</protein>
<sequence length="362" mass="39840">MAQIFNFSSGPAMLPAEVLKQAQQELRDWNGLGTSVMEVSHRGKEFIQVAEEAEKDFRDLLNVPSNYKVLFCHGGGRGQFAAVPLNILGDKTTADYVDAGYWAASAIKEAKKYCTPNVFDAKVTVDGLRAVKPMREWQLSDNAAYMHYCPNETIDGIAIDETPDFGKDVVVAADFSSTILSRPIDVSRYGVIYAGAQKNIGPAGLTIVIVREDLLGKANIACPSILDYSILNDNGSMFNTPPTFAWYLSGLVFKWLKANGGVAEMDKINQQKAELLYGVIDNSDFYRNDVAKANRSRMNVPFQLADSALDKLFLEESFAAGLHALKGHRVVGGMRASIYNAMPLEGVKALTDFMVEFERRHG</sequence>
<organism>
    <name type="scientific">Escherichia coli (strain ATCC 8739 / DSM 1576 / NBRC 3972 / NCIMB 8545 / WDCM 00012 / Crooks)</name>
    <dbReference type="NCBI Taxonomy" id="481805"/>
    <lineage>
        <taxon>Bacteria</taxon>
        <taxon>Pseudomonadati</taxon>
        <taxon>Pseudomonadota</taxon>
        <taxon>Gammaproteobacteria</taxon>
        <taxon>Enterobacterales</taxon>
        <taxon>Enterobacteriaceae</taxon>
        <taxon>Escherichia</taxon>
    </lineage>
</organism>
<dbReference type="EC" id="2.6.1.52" evidence="1"/>
<dbReference type="EMBL" id="CP000946">
    <property type="protein sequence ID" value="ACA78318.1"/>
    <property type="molecule type" value="Genomic_DNA"/>
</dbReference>
<dbReference type="RefSeq" id="WP_000057149.1">
    <property type="nucleotide sequence ID" value="NZ_MTFT01000009.1"/>
</dbReference>
<dbReference type="SMR" id="B1IW24"/>
<dbReference type="GeneID" id="93776511"/>
<dbReference type="KEGG" id="ecl:EcolC_2689"/>
<dbReference type="HOGENOM" id="CLU_034866_0_2_6"/>
<dbReference type="UniPathway" id="UPA00135">
    <property type="reaction ID" value="UER00197"/>
</dbReference>
<dbReference type="UniPathway" id="UPA00244">
    <property type="reaction ID" value="UER00311"/>
</dbReference>
<dbReference type="GO" id="GO:0005737">
    <property type="term" value="C:cytoplasm"/>
    <property type="evidence" value="ECO:0007669"/>
    <property type="project" value="UniProtKB-SubCell"/>
</dbReference>
<dbReference type="GO" id="GO:0004648">
    <property type="term" value="F:O-phospho-L-serine:2-oxoglutarate aminotransferase activity"/>
    <property type="evidence" value="ECO:0007669"/>
    <property type="project" value="UniProtKB-UniRule"/>
</dbReference>
<dbReference type="GO" id="GO:0030170">
    <property type="term" value="F:pyridoxal phosphate binding"/>
    <property type="evidence" value="ECO:0007669"/>
    <property type="project" value="UniProtKB-UniRule"/>
</dbReference>
<dbReference type="GO" id="GO:0006564">
    <property type="term" value="P:L-serine biosynthetic process"/>
    <property type="evidence" value="ECO:0007669"/>
    <property type="project" value="UniProtKB-UniRule"/>
</dbReference>
<dbReference type="GO" id="GO:0008615">
    <property type="term" value="P:pyridoxine biosynthetic process"/>
    <property type="evidence" value="ECO:0007669"/>
    <property type="project" value="UniProtKB-UniRule"/>
</dbReference>
<dbReference type="CDD" id="cd00611">
    <property type="entry name" value="PSAT_like"/>
    <property type="match status" value="1"/>
</dbReference>
<dbReference type="FunFam" id="3.40.640.10:FF:000010">
    <property type="entry name" value="Phosphoserine aminotransferase"/>
    <property type="match status" value="1"/>
</dbReference>
<dbReference type="FunFam" id="3.90.1150.10:FF:000006">
    <property type="entry name" value="Phosphoserine aminotransferase"/>
    <property type="match status" value="1"/>
</dbReference>
<dbReference type="Gene3D" id="3.90.1150.10">
    <property type="entry name" value="Aspartate Aminotransferase, domain 1"/>
    <property type="match status" value="1"/>
</dbReference>
<dbReference type="Gene3D" id="3.40.640.10">
    <property type="entry name" value="Type I PLP-dependent aspartate aminotransferase-like (Major domain)"/>
    <property type="match status" value="1"/>
</dbReference>
<dbReference type="HAMAP" id="MF_00160">
    <property type="entry name" value="SerC_aminotrans_5"/>
    <property type="match status" value="1"/>
</dbReference>
<dbReference type="InterPro" id="IPR000192">
    <property type="entry name" value="Aminotrans_V_dom"/>
</dbReference>
<dbReference type="InterPro" id="IPR020578">
    <property type="entry name" value="Aminotrans_V_PyrdxlP_BS"/>
</dbReference>
<dbReference type="InterPro" id="IPR022278">
    <property type="entry name" value="Pser_aminoTfrase"/>
</dbReference>
<dbReference type="InterPro" id="IPR015424">
    <property type="entry name" value="PyrdxlP-dep_Trfase"/>
</dbReference>
<dbReference type="InterPro" id="IPR015421">
    <property type="entry name" value="PyrdxlP-dep_Trfase_major"/>
</dbReference>
<dbReference type="InterPro" id="IPR015422">
    <property type="entry name" value="PyrdxlP-dep_Trfase_small"/>
</dbReference>
<dbReference type="NCBIfam" id="NF003764">
    <property type="entry name" value="PRK05355.1"/>
    <property type="match status" value="1"/>
</dbReference>
<dbReference type="NCBIfam" id="TIGR01364">
    <property type="entry name" value="serC_1"/>
    <property type="match status" value="1"/>
</dbReference>
<dbReference type="PANTHER" id="PTHR43247">
    <property type="entry name" value="PHOSPHOSERINE AMINOTRANSFERASE"/>
    <property type="match status" value="1"/>
</dbReference>
<dbReference type="PANTHER" id="PTHR43247:SF1">
    <property type="entry name" value="PHOSPHOSERINE AMINOTRANSFERASE"/>
    <property type="match status" value="1"/>
</dbReference>
<dbReference type="Pfam" id="PF00266">
    <property type="entry name" value="Aminotran_5"/>
    <property type="match status" value="1"/>
</dbReference>
<dbReference type="PIRSF" id="PIRSF000525">
    <property type="entry name" value="SerC"/>
    <property type="match status" value="1"/>
</dbReference>
<dbReference type="SUPFAM" id="SSF53383">
    <property type="entry name" value="PLP-dependent transferases"/>
    <property type="match status" value="1"/>
</dbReference>
<dbReference type="PROSITE" id="PS00595">
    <property type="entry name" value="AA_TRANSFER_CLASS_5"/>
    <property type="match status" value="1"/>
</dbReference>
<name>SERC_ECOLC</name>
<keyword id="KW-0028">Amino-acid biosynthesis</keyword>
<keyword id="KW-0032">Aminotransferase</keyword>
<keyword id="KW-0963">Cytoplasm</keyword>
<keyword id="KW-0663">Pyridoxal phosphate</keyword>
<keyword id="KW-0664">Pyridoxine biosynthesis</keyword>
<keyword id="KW-0718">Serine biosynthesis</keyword>
<keyword id="KW-0808">Transferase</keyword>
<evidence type="ECO:0000255" key="1">
    <source>
        <dbReference type="HAMAP-Rule" id="MF_00160"/>
    </source>
</evidence>
<feature type="chain" id="PRO_1000203531" description="Phosphoserine aminotransferase">
    <location>
        <begin position="1"/>
        <end position="362"/>
    </location>
</feature>
<feature type="binding site" evidence="1">
    <location>
        <position position="9"/>
    </location>
    <ligand>
        <name>L-glutamate</name>
        <dbReference type="ChEBI" id="CHEBI:29985"/>
    </ligand>
</feature>
<feature type="binding site" evidence="1">
    <location>
        <position position="42"/>
    </location>
    <ligand>
        <name>L-glutamate</name>
        <dbReference type="ChEBI" id="CHEBI:29985"/>
    </ligand>
</feature>
<feature type="binding site" evidence="1">
    <location>
        <begin position="76"/>
        <end position="77"/>
    </location>
    <ligand>
        <name>pyridoxal 5'-phosphate</name>
        <dbReference type="ChEBI" id="CHEBI:597326"/>
    </ligand>
</feature>
<feature type="binding site" evidence="1">
    <location>
        <position position="102"/>
    </location>
    <ligand>
        <name>pyridoxal 5'-phosphate</name>
        <dbReference type="ChEBI" id="CHEBI:597326"/>
    </ligand>
</feature>
<feature type="binding site" evidence="1">
    <location>
        <position position="153"/>
    </location>
    <ligand>
        <name>pyridoxal 5'-phosphate</name>
        <dbReference type="ChEBI" id="CHEBI:597326"/>
    </ligand>
</feature>
<feature type="binding site" evidence="1">
    <location>
        <position position="174"/>
    </location>
    <ligand>
        <name>pyridoxal 5'-phosphate</name>
        <dbReference type="ChEBI" id="CHEBI:597326"/>
    </ligand>
</feature>
<feature type="binding site" evidence="1">
    <location>
        <position position="197"/>
    </location>
    <ligand>
        <name>pyridoxal 5'-phosphate</name>
        <dbReference type="ChEBI" id="CHEBI:597326"/>
    </ligand>
</feature>
<feature type="binding site" evidence="1">
    <location>
        <begin position="239"/>
        <end position="240"/>
    </location>
    <ligand>
        <name>pyridoxal 5'-phosphate</name>
        <dbReference type="ChEBI" id="CHEBI:597326"/>
    </ligand>
</feature>
<feature type="modified residue" description="N6-(pyridoxal phosphate)lysine" evidence="1">
    <location>
        <position position="198"/>
    </location>
</feature>
<accession>B1IW24</accession>
<reference key="1">
    <citation type="submission" date="2008-02" db="EMBL/GenBank/DDBJ databases">
        <title>Complete sequence of Escherichia coli C str. ATCC 8739.</title>
        <authorList>
            <person name="Copeland A."/>
            <person name="Lucas S."/>
            <person name="Lapidus A."/>
            <person name="Glavina del Rio T."/>
            <person name="Dalin E."/>
            <person name="Tice H."/>
            <person name="Bruce D."/>
            <person name="Goodwin L."/>
            <person name="Pitluck S."/>
            <person name="Kiss H."/>
            <person name="Brettin T."/>
            <person name="Detter J.C."/>
            <person name="Han C."/>
            <person name="Kuske C.R."/>
            <person name="Schmutz J."/>
            <person name="Larimer F."/>
            <person name="Land M."/>
            <person name="Hauser L."/>
            <person name="Kyrpides N."/>
            <person name="Mikhailova N."/>
            <person name="Ingram L."/>
            <person name="Richardson P."/>
        </authorList>
    </citation>
    <scope>NUCLEOTIDE SEQUENCE [LARGE SCALE GENOMIC DNA]</scope>
    <source>
        <strain>ATCC 8739 / DSM 1576 / NBRC 3972 / NCIMB 8545 / WDCM 00012 / Crooks</strain>
    </source>
</reference>